<reference key="1">
    <citation type="journal article" date="2005" name="Science">
        <title>The transcriptional landscape of the mammalian genome.</title>
        <authorList>
            <person name="Carninci P."/>
            <person name="Kasukawa T."/>
            <person name="Katayama S."/>
            <person name="Gough J."/>
            <person name="Frith M.C."/>
            <person name="Maeda N."/>
            <person name="Oyama R."/>
            <person name="Ravasi T."/>
            <person name="Lenhard B."/>
            <person name="Wells C."/>
            <person name="Kodzius R."/>
            <person name="Shimokawa K."/>
            <person name="Bajic V.B."/>
            <person name="Brenner S.E."/>
            <person name="Batalov S."/>
            <person name="Forrest A.R."/>
            <person name="Zavolan M."/>
            <person name="Davis M.J."/>
            <person name="Wilming L.G."/>
            <person name="Aidinis V."/>
            <person name="Allen J.E."/>
            <person name="Ambesi-Impiombato A."/>
            <person name="Apweiler R."/>
            <person name="Aturaliya R.N."/>
            <person name="Bailey T.L."/>
            <person name="Bansal M."/>
            <person name="Baxter L."/>
            <person name="Beisel K.W."/>
            <person name="Bersano T."/>
            <person name="Bono H."/>
            <person name="Chalk A.M."/>
            <person name="Chiu K.P."/>
            <person name="Choudhary V."/>
            <person name="Christoffels A."/>
            <person name="Clutterbuck D.R."/>
            <person name="Crowe M.L."/>
            <person name="Dalla E."/>
            <person name="Dalrymple B.P."/>
            <person name="de Bono B."/>
            <person name="Della Gatta G."/>
            <person name="di Bernardo D."/>
            <person name="Down T."/>
            <person name="Engstrom P."/>
            <person name="Fagiolini M."/>
            <person name="Faulkner G."/>
            <person name="Fletcher C.F."/>
            <person name="Fukushima T."/>
            <person name="Furuno M."/>
            <person name="Futaki S."/>
            <person name="Gariboldi M."/>
            <person name="Georgii-Hemming P."/>
            <person name="Gingeras T.R."/>
            <person name="Gojobori T."/>
            <person name="Green R.E."/>
            <person name="Gustincich S."/>
            <person name="Harbers M."/>
            <person name="Hayashi Y."/>
            <person name="Hensch T.K."/>
            <person name="Hirokawa N."/>
            <person name="Hill D."/>
            <person name="Huminiecki L."/>
            <person name="Iacono M."/>
            <person name="Ikeo K."/>
            <person name="Iwama A."/>
            <person name="Ishikawa T."/>
            <person name="Jakt M."/>
            <person name="Kanapin A."/>
            <person name="Katoh M."/>
            <person name="Kawasawa Y."/>
            <person name="Kelso J."/>
            <person name="Kitamura H."/>
            <person name="Kitano H."/>
            <person name="Kollias G."/>
            <person name="Krishnan S.P."/>
            <person name="Kruger A."/>
            <person name="Kummerfeld S.K."/>
            <person name="Kurochkin I.V."/>
            <person name="Lareau L.F."/>
            <person name="Lazarevic D."/>
            <person name="Lipovich L."/>
            <person name="Liu J."/>
            <person name="Liuni S."/>
            <person name="McWilliam S."/>
            <person name="Madan Babu M."/>
            <person name="Madera M."/>
            <person name="Marchionni L."/>
            <person name="Matsuda H."/>
            <person name="Matsuzawa S."/>
            <person name="Miki H."/>
            <person name="Mignone F."/>
            <person name="Miyake S."/>
            <person name="Morris K."/>
            <person name="Mottagui-Tabar S."/>
            <person name="Mulder N."/>
            <person name="Nakano N."/>
            <person name="Nakauchi H."/>
            <person name="Ng P."/>
            <person name="Nilsson R."/>
            <person name="Nishiguchi S."/>
            <person name="Nishikawa S."/>
            <person name="Nori F."/>
            <person name="Ohara O."/>
            <person name="Okazaki Y."/>
            <person name="Orlando V."/>
            <person name="Pang K.C."/>
            <person name="Pavan W.J."/>
            <person name="Pavesi G."/>
            <person name="Pesole G."/>
            <person name="Petrovsky N."/>
            <person name="Piazza S."/>
            <person name="Reed J."/>
            <person name="Reid J.F."/>
            <person name="Ring B.Z."/>
            <person name="Ringwald M."/>
            <person name="Rost B."/>
            <person name="Ruan Y."/>
            <person name="Salzberg S.L."/>
            <person name="Sandelin A."/>
            <person name="Schneider C."/>
            <person name="Schoenbach C."/>
            <person name="Sekiguchi K."/>
            <person name="Semple C.A."/>
            <person name="Seno S."/>
            <person name="Sessa L."/>
            <person name="Sheng Y."/>
            <person name="Shibata Y."/>
            <person name="Shimada H."/>
            <person name="Shimada K."/>
            <person name="Silva D."/>
            <person name="Sinclair B."/>
            <person name="Sperling S."/>
            <person name="Stupka E."/>
            <person name="Sugiura K."/>
            <person name="Sultana R."/>
            <person name="Takenaka Y."/>
            <person name="Taki K."/>
            <person name="Tammoja K."/>
            <person name="Tan S.L."/>
            <person name="Tang S."/>
            <person name="Taylor M.S."/>
            <person name="Tegner J."/>
            <person name="Teichmann S.A."/>
            <person name="Ueda H.R."/>
            <person name="van Nimwegen E."/>
            <person name="Verardo R."/>
            <person name="Wei C.L."/>
            <person name="Yagi K."/>
            <person name="Yamanishi H."/>
            <person name="Zabarovsky E."/>
            <person name="Zhu S."/>
            <person name="Zimmer A."/>
            <person name="Hide W."/>
            <person name="Bult C."/>
            <person name="Grimmond S.M."/>
            <person name="Teasdale R.D."/>
            <person name="Liu E.T."/>
            <person name="Brusic V."/>
            <person name="Quackenbush J."/>
            <person name="Wahlestedt C."/>
            <person name="Mattick J.S."/>
            <person name="Hume D.A."/>
            <person name="Kai C."/>
            <person name="Sasaki D."/>
            <person name="Tomaru Y."/>
            <person name="Fukuda S."/>
            <person name="Kanamori-Katayama M."/>
            <person name="Suzuki M."/>
            <person name="Aoki J."/>
            <person name="Arakawa T."/>
            <person name="Iida J."/>
            <person name="Imamura K."/>
            <person name="Itoh M."/>
            <person name="Kato T."/>
            <person name="Kawaji H."/>
            <person name="Kawagashira N."/>
            <person name="Kawashima T."/>
            <person name="Kojima M."/>
            <person name="Kondo S."/>
            <person name="Konno H."/>
            <person name="Nakano K."/>
            <person name="Ninomiya N."/>
            <person name="Nishio T."/>
            <person name="Okada M."/>
            <person name="Plessy C."/>
            <person name="Shibata K."/>
            <person name="Shiraki T."/>
            <person name="Suzuki S."/>
            <person name="Tagami M."/>
            <person name="Waki K."/>
            <person name="Watahiki A."/>
            <person name="Okamura-Oho Y."/>
            <person name="Suzuki H."/>
            <person name="Kawai J."/>
            <person name="Hayashizaki Y."/>
        </authorList>
    </citation>
    <scope>NUCLEOTIDE SEQUENCE [LARGE SCALE MRNA]</scope>
    <source>
        <strain evidence="7">C57BL/6J</strain>
        <tissue evidence="7">Skin</tissue>
    </source>
</reference>
<reference key="2">
    <citation type="journal article" date="2010" name="Cell">
        <title>A tissue-specific atlas of mouse protein phosphorylation and expression.</title>
        <authorList>
            <person name="Huttlin E.L."/>
            <person name="Jedrychowski M.P."/>
            <person name="Elias J.E."/>
            <person name="Goswami T."/>
            <person name="Rad R."/>
            <person name="Beausoleil S.A."/>
            <person name="Villen J."/>
            <person name="Haas W."/>
            <person name="Sowa M.E."/>
            <person name="Gygi S.P."/>
        </authorList>
    </citation>
    <scope>IDENTIFICATION BY MASS SPECTROMETRY [LARGE SCALE ANALYSIS]</scope>
    <source>
        <tissue>Brain</tissue>
        <tissue>Brown adipose tissue</tissue>
        <tissue>Kidney</tissue>
        <tissue>Liver</tissue>
        <tissue>Lung</tissue>
        <tissue>Spleen</tissue>
        <tissue>Testis</tissue>
    </source>
</reference>
<evidence type="ECO:0000250" key="1">
    <source>
        <dbReference type="UniProtKB" id="O00584"/>
    </source>
</evidence>
<evidence type="ECO:0000250" key="2">
    <source>
        <dbReference type="UniProtKB" id="P08056"/>
    </source>
</evidence>
<evidence type="ECO:0000255" key="3"/>
<evidence type="ECO:0000255" key="4">
    <source>
        <dbReference type="PROSITE-ProRule" id="PRU10045"/>
    </source>
</evidence>
<evidence type="ECO:0000255" key="5">
    <source>
        <dbReference type="PROSITE-ProRule" id="PRU10046"/>
    </source>
</evidence>
<evidence type="ECO:0000305" key="6"/>
<evidence type="ECO:0000312" key="7">
    <source>
        <dbReference type="EMBL" id="BAC26326.1"/>
    </source>
</evidence>
<evidence type="ECO:0000312" key="8">
    <source>
        <dbReference type="MGI" id="MGI:3702087"/>
    </source>
</evidence>
<gene>
    <name evidence="8" type="primary">Rnaset2b</name>
</gene>
<name>RNT2B_MOUSE</name>
<protein>
    <recommendedName>
        <fullName evidence="8">Ribonuclease T2-B</fullName>
        <ecNumber evidence="4">4.6.1.19</ecNumber>
    </recommendedName>
    <alternativeName>
        <fullName evidence="6">Ribonuclease 6-B</fullName>
    </alternativeName>
</protein>
<organism>
    <name type="scientific">Mus musculus</name>
    <name type="common">Mouse</name>
    <dbReference type="NCBI Taxonomy" id="10090"/>
    <lineage>
        <taxon>Eukaryota</taxon>
        <taxon>Metazoa</taxon>
        <taxon>Chordata</taxon>
        <taxon>Craniata</taxon>
        <taxon>Vertebrata</taxon>
        <taxon>Euteleostomi</taxon>
        <taxon>Mammalia</taxon>
        <taxon>Eutheria</taxon>
        <taxon>Euarchontoglires</taxon>
        <taxon>Glires</taxon>
        <taxon>Rodentia</taxon>
        <taxon>Myomorpha</taxon>
        <taxon>Muroidea</taxon>
        <taxon>Muridae</taxon>
        <taxon>Murinae</taxon>
        <taxon>Mus</taxon>
        <taxon>Mus</taxon>
    </lineage>
</organism>
<comment type="function">
    <text evidence="1">Ribonuclease that plays an essential role in innate immune response by recognizing and degrading RNAs from microbial pathogens that are subsequently sensed by TLR8. Cleaves preferentially single-stranded RNA molecules between purine and uridine residues, which critically contributes to the supply of catabolic uridine and the generation of purine-2',3'-cyclophosphate-terminated oligoribonucleotides. In turn, RNase T2 degradation products promote the RNA-dependent activation of TLR8. In plasmacytoid dendritic cells, it cooperates with PLD3 or PLD4 5'-&gt;3' exonucleases to process RNA fragments and release 2',3'-cyclic guanosine monophosphate (2',3'-cGMP), a potent stimulatory ligand for TLR7. Also plays a key role in degradation of mitochondrial RNA and processing of non-coding RNA imported from the cytosol into mitochondria. Participates as well in degradation of mitochondrion-associated cytosolic rRNAs.</text>
</comment>
<comment type="catalytic activity">
    <reaction evidence="4">
        <text>a ribonucleotidyl-ribonucleotide-RNA + H2O = a 3'-end 3'-phospho-ribonucleotide-RNA + a 5'-end dephospho-ribonucleoside-RNA + H(+)</text>
        <dbReference type="Rhea" id="RHEA:68052"/>
        <dbReference type="Rhea" id="RHEA-COMP:10463"/>
        <dbReference type="Rhea" id="RHEA-COMP:13936"/>
        <dbReference type="Rhea" id="RHEA-COMP:17355"/>
        <dbReference type="ChEBI" id="CHEBI:15377"/>
        <dbReference type="ChEBI" id="CHEBI:15378"/>
        <dbReference type="ChEBI" id="CHEBI:83062"/>
        <dbReference type="ChEBI" id="CHEBI:138284"/>
        <dbReference type="ChEBI" id="CHEBI:173118"/>
        <dbReference type="EC" id="4.6.1.19"/>
    </reaction>
</comment>
<comment type="catalytic activity">
    <reaction evidence="1">
        <text>an adenylyl-uridine-RNA = a 3'-end 2',3'-cyclophospho-AMP-RNA + a 5'-end dephospho-uridine-RNA</text>
        <dbReference type="Rhea" id="RHEA:81383"/>
        <dbReference type="Rhea" id="RHEA-COMP:17356"/>
        <dbReference type="Rhea" id="RHEA-COMP:19675"/>
        <dbReference type="Rhea" id="RHEA-COMP:19676"/>
        <dbReference type="ChEBI" id="CHEBI:173224"/>
        <dbReference type="ChEBI" id="CHEBI:231879"/>
        <dbReference type="ChEBI" id="CHEBI:231881"/>
    </reaction>
    <physiologicalReaction direction="left-to-right" evidence="1">
        <dbReference type="Rhea" id="RHEA:81384"/>
    </physiologicalReaction>
</comment>
<comment type="catalytic activity">
    <reaction evidence="1">
        <text>a guanylyl-uridine-RNA = a 3'-end 2',3'-cyclophospho-GMP-RNA + a 5'-end dephospho-uridine-RNA</text>
        <dbReference type="Rhea" id="RHEA:81323"/>
        <dbReference type="Rhea" id="RHEA-COMP:17356"/>
        <dbReference type="Rhea" id="RHEA-COMP:19658"/>
        <dbReference type="Rhea" id="RHEA-COMP:19659"/>
        <dbReference type="ChEBI" id="CHEBI:173224"/>
        <dbReference type="ChEBI" id="CHEBI:231849"/>
        <dbReference type="ChEBI" id="CHEBI:231850"/>
    </reaction>
</comment>
<comment type="activity regulation">
    <text evidence="1">Inhibited by Zn(2+) and Cu(2+).</text>
</comment>
<comment type="subcellular location">
    <subcellularLocation>
        <location evidence="1">Secreted</location>
    </subcellularLocation>
    <subcellularLocation>
        <location evidence="1">Lysosome lumen</location>
    </subcellularLocation>
    <subcellularLocation>
        <location evidence="1">Endoplasmic reticulum lumen</location>
    </subcellularLocation>
    <subcellularLocation>
        <location evidence="1">Mitochondrion intermembrane space</location>
    </subcellularLocation>
</comment>
<comment type="similarity">
    <text evidence="6">Belongs to the RNase T2 family.</text>
</comment>
<keyword id="KW-1015">Disulfide bond</keyword>
<keyword id="KW-0255">Endonuclease</keyword>
<keyword id="KW-0256">Endoplasmic reticulum</keyword>
<keyword id="KW-0325">Glycoprotein</keyword>
<keyword id="KW-0378">Hydrolase</keyword>
<keyword id="KW-0391">Immunity</keyword>
<keyword id="KW-0399">Innate immunity</keyword>
<keyword id="KW-0456">Lyase</keyword>
<keyword id="KW-0458">Lysosome</keyword>
<keyword id="KW-0496">Mitochondrion</keyword>
<keyword id="KW-0540">Nuclease</keyword>
<keyword id="KW-1185">Reference proteome</keyword>
<keyword id="KW-0964">Secreted</keyword>
<keyword id="KW-0732">Signal</keyword>
<proteinExistence type="evidence at protein level"/>
<dbReference type="EC" id="4.6.1.19" evidence="4"/>
<dbReference type="EMBL" id="AK029149">
    <property type="protein sequence ID" value="BAC26326.1"/>
    <property type="molecule type" value="mRNA"/>
</dbReference>
<dbReference type="CCDS" id="CCDS37429.1"/>
<dbReference type="RefSeq" id="NP_080887.1">
    <property type="nucleotide sequence ID" value="NM_026611.2"/>
</dbReference>
<dbReference type="SMR" id="C0HKG6"/>
<dbReference type="FunCoup" id="C0HKG6">
    <property type="interactions" value="525"/>
</dbReference>
<dbReference type="GlyCosmos" id="C0HKG6">
    <property type="glycosylation" value="3 sites, No reported glycans"/>
</dbReference>
<dbReference type="GlyGen" id="C0HKG6">
    <property type="glycosylation" value="3 sites"/>
</dbReference>
<dbReference type="jPOST" id="C0HKG6"/>
<dbReference type="Pumba" id="C0HKG6"/>
<dbReference type="DNASU" id="68195"/>
<dbReference type="Ensembl" id="ENSMUST00000089119.13">
    <property type="protein sequence ID" value="ENSMUSP00000086519.6"/>
    <property type="gene ID" value="ENSMUSG00000094724.9"/>
</dbReference>
<dbReference type="Ensembl" id="ENSMUST00000097420.7">
    <property type="protein sequence ID" value="ENSMUSP00000095031.6"/>
    <property type="gene ID" value="ENSMUSG00000095687.3"/>
</dbReference>
<dbReference type="Ensembl" id="ENSMUST00000179728.2">
    <property type="protein sequence ID" value="ENSMUSP00000137303.2"/>
    <property type="gene ID" value="ENSMUSG00000094724.9"/>
</dbReference>
<dbReference type="Ensembl" id="ENSMUST00000231550.2">
    <property type="protein sequence ID" value="ENSMUSP00000156290.2"/>
    <property type="gene ID" value="ENSMUSG00000116876.2"/>
</dbReference>
<dbReference type="Ensembl" id="ENSMUST00000231927.2">
    <property type="protein sequence ID" value="ENSMUSP00000156083.2"/>
    <property type="gene ID" value="ENSMUSG00000095687.3"/>
</dbReference>
<dbReference type="Ensembl" id="ENSMUST00000232307.2">
    <property type="protein sequence ID" value="ENSMUSP00000156372.2"/>
    <property type="gene ID" value="ENSMUSG00000116988.2"/>
</dbReference>
<dbReference type="GeneID" id="68195"/>
<dbReference type="KEGG" id="mmu:100037283"/>
<dbReference type="KEGG" id="mmu:68195"/>
<dbReference type="AGR" id="MGI:3702087"/>
<dbReference type="CTD" id="100037283"/>
<dbReference type="CTD" id="68195"/>
<dbReference type="MGI" id="MGI:3702087">
    <property type="gene designation" value="Rnaset2b"/>
</dbReference>
<dbReference type="VEuPathDB" id="HostDB:ENSMUSG00000094724"/>
<dbReference type="VEuPathDB" id="HostDB:ENSMUSG00000095687"/>
<dbReference type="VEuPathDB" id="HostDB:ENSMUSG00000116876"/>
<dbReference type="VEuPathDB" id="HostDB:ENSMUSG00000116988"/>
<dbReference type="GeneTree" id="ENSGT00640000091563"/>
<dbReference type="InParanoid" id="C0HKG6"/>
<dbReference type="OMA" id="TNCHIGS"/>
<dbReference type="OrthoDB" id="435754at2759"/>
<dbReference type="Reactome" id="R-MMU-6798695">
    <property type="pathway name" value="Neutrophil degranulation"/>
</dbReference>
<dbReference type="ChiTaRS" id="Rnaset2b">
    <property type="organism name" value="mouse"/>
</dbReference>
<dbReference type="PRO" id="PR:C0HKG6"/>
<dbReference type="Proteomes" id="UP000000589">
    <property type="component" value="Chromosome 17"/>
</dbReference>
<dbReference type="RNAct" id="C0HKG6">
    <property type="molecule type" value="protein"/>
</dbReference>
<dbReference type="Bgee" id="ENSMUSG00000094724">
    <property type="expression patterns" value="Expressed in right kidney and 112 other cell types or tissues"/>
</dbReference>
<dbReference type="ExpressionAtlas" id="C0HKG6">
    <property type="expression patterns" value="baseline and differential"/>
</dbReference>
<dbReference type="GO" id="GO:0005788">
    <property type="term" value="C:endoplasmic reticulum lumen"/>
    <property type="evidence" value="ECO:0007669"/>
    <property type="project" value="UniProtKB-SubCell"/>
</dbReference>
<dbReference type="GO" id="GO:0005576">
    <property type="term" value="C:extracellular region"/>
    <property type="evidence" value="ECO:0007669"/>
    <property type="project" value="UniProtKB-SubCell"/>
</dbReference>
<dbReference type="GO" id="GO:0043202">
    <property type="term" value="C:lysosomal lumen"/>
    <property type="evidence" value="ECO:0007669"/>
    <property type="project" value="UniProtKB-SubCell"/>
</dbReference>
<dbReference type="GO" id="GO:0005758">
    <property type="term" value="C:mitochondrial intermembrane space"/>
    <property type="evidence" value="ECO:0007669"/>
    <property type="project" value="UniProtKB-SubCell"/>
</dbReference>
<dbReference type="GO" id="GO:0033897">
    <property type="term" value="F:ribonuclease T2 activity"/>
    <property type="evidence" value="ECO:0007669"/>
    <property type="project" value="UniProtKB-EC"/>
</dbReference>
<dbReference type="GO" id="GO:0003723">
    <property type="term" value="F:RNA binding"/>
    <property type="evidence" value="ECO:0007669"/>
    <property type="project" value="InterPro"/>
</dbReference>
<dbReference type="GO" id="GO:0045087">
    <property type="term" value="P:innate immune response"/>
    <property type="evidence" value="ECO:0007669"/>
    <property type="project" value="UniProtKB-KW"/>
</dbReference>
<dbReference type="GO" id="GO:0006401">
    <property type="term" value="P:RNA catabolic process"/>
    <property type="evidence" value="ECO:0007669"/>
    <property type="project" value="UniProtKB-ARBA"/>
</dbReference>
<dbReference type="CDD" id="cd01061">
    <property type="entry name" value="RNase_T2_euk"/>
    <property type="match status" value="1"/>
</dbReference>
<dbReference type="FunFam" id="3.90.730.10:FF:000001">
    <property type="entry name" value="Ribonuclease T2"/>
    <property type="match status" value="1"/>
</dbReference>
<dbReference type="Gene3D" id="3.90.730.10">
    <property type="entry name" value="Ribonuclease T2-like"/>
    <property type="match status" value="1"/>
</dbReference>
<dbReference type="InterPro" id="IPR033697">
    <property type="entry name" value="Ribonuclease_T2_eukaryotic"/>
</dbReference>
<dbReference type="InterPro" id="IPR001568">
    <property type="entry name" value="RNase_T2-like"/>
</dbReference>
<dbReference type="InterPro" id="IPR036430">
    <property type="entry name" value="RNase_T2-like_sf"/>
</dbReference>
<dbReference type="InterPro" id="IPR018188">
    <property type="entry name" value="RNase_T2_His_AS_1"/>
</dbReference>
<dbReference type="InterPro" id="IPR033130">
    <property type="entry name" value="RNase_T2_His_AS_2"/>
</dbReference>
<dbReference type="PANTHER" id="PTHR11240">
    <property type="entry name" value="RIBONUCLEASE T2"/>
    <property type="match status" value="1"/>
</dbReference>
<dbReference type="PANTHER" id="PTHR11240:SF22">
    <property type="entry name" value="RIBONUCLEASE T2"/>
    <property type="match status" value="1"/>
</dbReference>
<dbReference type="Pfam" id="PF00445">
    <property type="entry name" value="Ribonuclease_T2"/>
    <property type="match status" value="1"/>
</dbReference>
<dbReference type="SUPFAM" id="SSF55895">
    <property type="entry name" value="Ribonuclease Rh-like"/>
    <property type="match status" value="1"/>
</dbReference>
<dbReference type="PROSITE" id="PS00530">
    <property type="entry name" value="RNASE_T2_1"/>
    <property type="match status" value="1"/>
</dbReference>
<dbReference type="PROSITE" id="PS00531">
    <property type="entry name" value="RNASE_T2_2"/>
    <property type="match status" value="1"/>
</dbReference>
<sequence>MAPAEARGALPGWISVLGWGLALCSLCGAGPLWSGSHEWKKLILTQHWPPTVCKEVNSCQDSLDYWTIHGLWPDRAEDCNQSWHFNLDEIKDLLRDMKIYWPDVIHRSSNRSQFWKHEWVKHGTCAAQVDALNSEKKYFGKSLDLYKQIDLNSVLQKFGIKPSINYYQLADFKDALTRIYGVVPKIQCLMPEQGESVQTVGQIELCFTKEDLHLRNCTEPGEQLSSRQEAWLAMEASTHGMMVCEDGPIFYPPPTKTQH</sequence>
<feature type="signal peptide" evidence="3">
    <location>
        <begin position="1"/>
        <end position="29"/>
    </location>
</feature>
<feature type="chain" id="PRO_0000440153" description="Ribonuclease T2-B">
    <location>
        <begin position="30"/>
        <end position="259"/>
    </location>
</feature>
<feature type="active site" evidence="4">
    <location>
        <position position="69"/>
    </location>
</feature>
<feature type="active site" evidence="2">
    <location>
        <position position="118"/>
    </location>
</feature>
<feature type="active site" evidence="5">
    <location>
        <position position="122"/>
    </location>
</feature>
<feature type="glycosylation site" description="N-linked (GlcNAc...) asparagine" evidence="3">
    <location>
        <position position="80"/>
    </location>
</feature>
<feature type="glycosylation site" description="N-linked (GlcNAc...) asparagine" evidence="3">
    <location>
        <position position="110"/>
    </location>
</feature>
<feature type="glycosylation site" description="N-linked (GlcNAc...) asparagine" evidence="3">
    <location>
        <position position="216"/>
    </location>
</feature>
<feature type="disulfide bond" evidence="1">
    <location>
        <begin position="53"/>
        <end position="59"/>
    </location>
</feature>
<feature type="disulfide bond" evidence="1">
    <location>
        <begin position="79"/>
        <end position="125"/>
    </location>
</feature>
<feature type="disulfide bond" evidence="1">
    <location>
        <begin position="188"/>
        <end position="244"/>
    </location>
</feature>
<feature type="disulfide bond" evidence="1">
    <location>
        <begin position="206"/>
        <end position="217"/>
    </location>
</feature>
<accession>C0HKG6</accession>
<accession>Q9CQ01</accession>